<organism>
    <name type="scientific">Escherichia coli O157:H7</name>
    <dbReference type="NCBI Taxonomy" id="83334"/>
    <lineage>
        <taxon>Bacteria</taxon>
        <taxon>Pseudomonadati</taxon>
        <taxon>Pseudomonadota</taxon>
        <taxon>Gammaproteobacteria</taxon>
        <taxon>Enterobacterales</taxon>
        <taxon>Enterobacteriaceae</taxon>
        <taxon>Escherichia</taxon>
    </lineage>
</organism>
<reference key="1">
    <citation type="journal article" date="2001" name="Nature">
        <title>Genome sequence of enterohaemorrhagic Escherichia coli O157:H7.</title>
        <authorList>
            <person name="Perna N.T."/>
            <person name="Plunkett G. III"/>
            <person name="Burland V."/>
            <person name="Mau B."/>
            <person name="Glasner J.D."/>
            <person name="Rose D.J."/>
            <person name="Mayhew G.F."/>
            <person name="Evans P.S."/>
            <person name="Gregor J."/>
            <person name="Kirkpatrick H.A."/>
            <person name="Posfai G."/>
            <person name="Hackett J."/>
            <person name="Klink S."/>
            <person name="Boutin A."/>
            <person name="Shao Y."/>
            <person name="Miller L."/>
            <person name="Grotbeck E.J."/>
            <person name="Davis N.W."/>
            <person name="Lim A."/>
            <person name="Dimalanta E.T."/>
            <person name="Potamousis K."/>
            <person name="Apodaca J."/>
            <person name="Anantharaman T.S."/>
            <person name="Lin J."/>
            <person name="Yen G."/>
            <person name="Schwartz D.C."/>
            <person name="Welch R.A."/>
            <person name="Blattner F.R."/>
        </authorList>
    </citation>
    <scope>NUCLEOTIDE SEQUENCE [LARGE SCALE GENOMIC DNA]</scope>
    <source>
        <strain>O157:H7 / EDL933 / ATCC 700927 / EHEC</strain>
    </source>
</reference>
<reference key="2">
    <citation type="journal article" date="2001" name="DNA Res.">
        <title>Complete genome sequence of enterohemorrhagic Escherichia coli O157:H7 and genomic comparison with a laboratory strain K-12.</title>
        <authorList>
            <person name="Hayashi T."/>
            <person name="Makino K."/>
            <person name="Ohnishi M."/>
            <person name="Kurokawa K."/>
            <person name="Ishii K."/>
            <person name="Yokoyama K."/>
            <person name="Han C.-G."/>
            <person name="Ohtsubo E."/>
            <person name="Nakayama K."/>
            <person name="Murata T."/>
            <person name="Tanaka M."/>
            <person name="Tobe T."/>
            <person name="Iida T."/>
            <person name="Takami H."/>
            <person name="Honda T."/>
            <person name="Sasakawa C."/>
            <person name="Ogasawara N."/>
            <person name="Yasunaga T."/>
            <person name="Kuhara S."/>
            <person name="Shiba T."/>
            <person name="Hattori M."/>
            <person name="Shinagawa H."/>
        </authorList>
    </citation>
    <scope>NUCLEOTIDE SEQUENCE [LARGE SCALE GENOMIC DNA]</scope>
    <source>
        <strain>O157:H7 / Sakai / RIMD 0509952 / EHEC</strain>
    </source>
</reference>
<proteinExistence type="inferred from homology"/>
<accession>Q8XA68</accession>
<accession>Q7AHU5</accession>
<comment type="similarity">
    <text evidence="1">Belongs to the UPF0412 family.</text>
</comment>
<gene>
    <name evidence="1" type="primary">yaaI</name>
    <name type="ordered locus">Z0013</name>
    <name type="ordered locus">ECs0013</name>
</gene>
<feature type="signal peptide" evidence="1">
    <location>
        <begin position="1"/>
        <end position="23"/>
    </location>
</feature>
<feature type="chain" id="PRO_0000278582" description="UPF0412 protein YaaI">
    <location>
        <begin position="24"/>
        <end position="134"/>
    </location>
</feature>
<protein>
    <recommendedName>
        <fullName evidence="1">UPF0412 protein YaaI</fullName>
    </recommendedName>
</protein>
<name>YAAI_ECO57</name>
<dbReference type="EMBL" id="AE005174">
    <property type="protein sequence ID" value="AAG54313.1"/>
    <property type="molecule type" value="Genomic_DNA"/>
</dbReference>
<dbReference type="EMBL" id="BA000007">
    <property type="protein sequence ID" value="BAB33436.1"/>
    <property type="molecule type" value="Genomic_DNA"/>
</dbReference>
<dbReference type="PIR" id="E85481">
    <property type="entry name" value="E85481"/>
</dbReference>
<dbReference type="PIR" id="E90630">
    <property type="entry name" value="E90630"/>
</dbReference>
<dbReference type="RefSeq" id="NP_308040.1">
    <property type="nucleotide sequence ID" value="NC_002695.1"/>
</dbReference>
<dbReference type="RefSeq" id="WP_000843566.1">
    <property type="nucleotide sequence ID" value="NZ_VOAI01000002.1"/>
</dbReference>
<dbReference type="GeneID" id="913405"/>
<dbReference type="KEGG" id="ece:Z0013"/>
<dbReference type="KEGG" id="ecs:ECs_0013"/>
<dbReference type="PATRIC" id="fig|386585.9.peg.109"/>
<dbReference type="eggNOG" id="ENOG502ZXCI">
    <property type="taxonomic scope" value="Bacteria"/>
</dbReference>
<dbReference type="HOGENOM" id="CLU_158661_0_0_6"/>
<dbReference type="OMA" id="CVKKIAF"/>
<dbReference type="Proteomes" id="UP000000558">
    <property type="component" value="Chromosome"/>
</dbReference>
<dbReference type="Proteomes" id="UP000002519">
    <property type="component" value="Chromosome"/>
</dbReference>
<dbReference type="HAMAP" id="MF_01372">
    <property type="entry name" value="UPF0412"/>
    <property type="match status" value="1"/>
</dbReference>
<dbReference type="InterPro" id="IPR020240">
    <property type="entry name" value="UPF0412_YaaI"/>
</dbReference>
<dbReference type="NCBIfam" id="NF007541">
    <property type="entry name" value="PRK10154.1"/>
    <property type="match status" value="1"/>
</dbReference>
<dbReference type="Pfam" id="PF10807">
    <property type="entry name" value="DUF2541"/>
    <property type="match status" value="1"/>
</dbReference>
<evidence type="ECO:0000255" key="1">
    <source>
        <dbReference type="HAMAP-Rule" id="MF_01372"/>
    </source>
</evidence>
<sequence length="134" mass="14466">MKSVFTISASLAISLMLCCTAQANDHKLLGVIAMPRNETNALALKLPVCRIVKRIQLSADHGDLQLSGASVYFKAARSASQSLNIPSEIKEGQTTDWININSDNDNKRCVSKITFSGHTVNSSDMATLKIIGDD</sequence>
<keyword id="KW-1185">Reference proteome</keyword>
<keyword id="KW-0732">Signal</keyword>